<protein>
    <recommendedName>
        <fullName evidence="1">NAD(P)H-quinone oxidoreductase subunit 2</fullName>
        <ecNumber evidence="1">7.1.1.-</ecNumber>
    </recommendedName>
    <alternativeName>
        <fullName evidence="1">NAD(P)H dehydrogenase subunit 2</fullName>
    </alternativeName>
    <alternativeName>
        <fullName evidence="1">NADH-plastoquinone oxidoreductase subunit 2</fullName>
    </alternativeName>
    <alternativeName>
        <fullName evidence="1">NDH-1, subunit 2</fullName>
    </alternativeName>
</protein>
<feature type="chain" id="PRO_0000117685" description="NAD(P)H-quinone oxidoreductase subunit 2">
    <location>
        <begin position="1"/>
        <end position="521"/>
    </location>
</feature>
<feature type="transmembrane region" description="Helical" evidence="1">
    <location>
        <begin position="16"/>
        <end position="36"/>
    </location>
</feature>
<feature type="transmembrane region" description="Helical" evidence="1">
    <location>
        <begin position="40"/>
        <end position="60"/>
    </location>
</feature>
<feature type="transmembrane region" description="Helical" evidence="1">
    <location>
        <begin position="80"/>
        <end position="100"/>
    </location>
</feature>
<feature type="transmembrane region" description="Helical" evidence="1">
    <location>
        <begin position="110"/>
        <end position="130"/>
    </location>
</feature>
<feature type="transmembrane region" description="Helical" evidence="1">
    <location>
        <begin position="133"/>
        <end position="153"/>
    </location>
</feature>
<feature type="transmembrane region" description="Helical" evidence="1">
    <location>
        <begin position="168"/>
        <end position="188"/>
    </location>
</feature>
<feature type="transmembrane region" description="Helical" evidence="1">
    <location>
        <begin position="212"/>
        <end position="232"/>
    </location>
</feature>
<feature type="transmembrane region" description="Helical" evidence="1">
    <location>
        <begin position="246"/>
        <end position="266"/>
    </location>
</feature>
<feature type="transmembrane region" description="Helical" evidence="1">
    <location>
        <begin position="280"/>
        <end position="300"/>
    </location>
</feature>
<feature type="transmembrane region" description="Helical" evidence="1">
    <location>
        <begin position="308"/>
        <end position="328"/>
    </location>
</feature>
<feature type="transmembrane region" description="Helical" evidence="1">
    <location>
        <begin position="336"/>
        <end position="356"/>
    </location>
</feature>
<feature type="transmembrane region" description="Helical" evidence="1">
    <location>
        <begin position="380"/>
        <end position="400"/>
    </location>
</feature>
<feature type="transmembrane region" description="Helical" evidence="1">
    <location>
        <begin position="402"/>
        <end position="422"/>
    </location>
</feature>
<feature type="transmembrane region" description="Helical" evidence="1">
    <location>
        <begin position="468"/>
        <end position="488"/>
    </location>
</feature>
<feature type="sequence conflict" description="In Ref. 1; BAA14330." evidence="2" ref="1">
    <original>G</original>
    <variation>R</variation>
    <location>
        <position position="412"/>
    </location>
</feature>
<name>NU2C_SYNY3</name>
<comment type="function">
    <text evidence="1">NDH-1 shuttles electrons from an unknown electron donor, via FMN and iron-sulfur (Fe-S) centers, to quinones in the respiratory and/or the photosynthetic chain. The immediate electron acceptor for the enzyme in this species is believed to be plastoquinone. Couples the redox reaction to proton translocation, and thus conserves the redox energy in a proton gradient. Cyanobacterial NDH-1 also plays a role in inorganic carbon-concentration.</text>
</comment>
<comment type="catalytic activity">
    <reaction evidence="1">
        <text>a plastoquinone + NADH + (n+1) H(+)(in) = a plastoquinol + NAD(+) + n H(+)(out)</text>
        <dbReference type="Rhea" id="RHEA:42608"/>
        <dbReference type="Rhea" id="RHEA-COMP:9561"/>
        <dbReference type="Rhea" id="RHEA-COMP:9562"/>
        <dbReference type="ChEBI" id="CHEBI:15378"/>
        <dbReference type="ChEBI" id="CHEBI:17757"/>
        <dbReference type="ChEBI" id="CHEBI:57540"/>
        <dbReference type="ChEBI" id="CHEBI:57945"/>
        <dbReference type="ChEBI" id="CHEBI:62192"/>
    </reaction>
</comment>
<comment type="catalytic activity">
    <reaction evidence="1">
        <text>a plastoquinone + NADPH + (n+1) H(+)(in) = a plastoquinol + NADP(+) + n H(+)(out)</text>
        <dbReference type="Rhea" id="RHEA:42612"/>
        <dbReference type="Rhea" id="RHEA-COMP:9561"/>
        <dbReference type="Rhea" id="RHEA-COMP:9562"/>
        <dbReference type="ChEBI" id="CHEBI:15378"/>
        <dbReference type="ChEBI" id="CHEBI:17757"/>
        <dbReference type="ChEBI" id="CHEBI:57783"/>
        <dbReference type="ChEBI" id="CHEBI:58349"/>
        <dbReference type="ChEBI" id="CHEBI:62192"/>
    </reaction>
</comment>
<comment type="subunit">
    <text evidence="1">NDH-1 can be composed of about 15 different subunits; different subcomplexes with different compositions have been identified which probably have different functions.</text>
</comment>
<comment type="subcellular location">
    <subcellularLocation>
        <location evidence="1">Cellular thylakoid membrane</location>
        <topology evidence="1">Multi-pass membrane protein</topology>
    </subcellularLocation>
</comment>
<comment type="similarity">
    <text evidence="1">Belongs to the complex I subunit 2 family.</text>
</comment>
<dbReference type="EC" id="7.1.1.-" evidence="1"/>
<dbReference type="EMBL" id="D90288">
    <property type="protein sequence ID" value="BAA14330.1"/>
    <property type="molecule type" value="Genomic_DNA"/>
</dbReference>
<dbReference type="EMBL" id="BA000022">
    <property type="protein sequence ID" value="BAA16721.1"/>
    <property type="molecule type" value="Genomic_DNA"/>
</dbReference>
<dbReference type="PIR" id="S74569">
    <property type="entry name" value="S74569"/>
</dbReference>
<dbReference type="SMR" id="P72714"/>
<dbReference type="IntAct" id="P72714">
    <property type="interactions" value="9"/>
</dbReference>
<dbReference type="STRING" id="1148.gene:10497576"/>
<dbReference type="PaxDb" id="1148-1651794"/>
<dbReference type="EnsemblBacteria" id="BAA16721">
    <property type="protein sequence ID" value="BAA16721"/>
    <property type="gene ID" value="BAA16721"/>
</dbReference>
<dbReference type="KEGG" id="syn:sll0223"/>
<dbReference type="eggNOG" id="COG1007">
    <property type="taxonomic scope" value="Bacteria"/>
</dbReference>
<dbReference type="InParanoid" id="P72714"/>
<dbReference type="PhylomeDB" id="P72714"/>
<dbReference type="Proteomes" id="UP000001425">
    <property type="component" value="Chromosome"/>
</dbReference>
<dbReference type="GO" id="GO:0031676">
    <property type="term" value="C:plasma membrane-derived thylakoid membrane"/>
    <property type="evidence" value="ECO:0007669"/>
    <property type="project" value="UniProtKB-SubCell"/>
</dbReference>
<dbReference type="GO" id="GO:0008137">
    <property type="term" value="F:NADH dehydrogenase (ubiquinone) activity"/>
    <property type="evidence" value="ECO:0007669"/>
    <property type="project" value="InterPro"/>
</dbReference>
<dbReference type="GO" id="GO:0048038">
    <property type="term" value="F:quinone binding"/>
    <property type="evidence" value="ECO:0007669"/>
    <property type="project" value="UniProtKB-KW"/>
</dbReference>
<dbReference type="GO" id="GO:0042773">
    <property type="term" value="P:ATP synthesis coupled electron transport"/>
    <property type="evidence" value="ECO:0007669"/>
    <property type="project" value="InterPro"/>
</dbReference>
<dbReference type="GO" id="GO:0019684">
    <property type="term" value="P:photosynthesis, light reaction"/>
    <property type="evidence" value="ECO:0007669"/>
    <property type="project" value="UniProtKB-UniRule"/>
</dbReference>
<dbReference type="HAMAP" id="MF_00445">
    <property type="entry name" value="NDH1_NuoN_1"/>
    <property type="match status" value="1"/>
</dbReference>
<dbReference type="InterPro" id="IPR010096">
    <property type="entry name" value="NADH-Q_OxRdtase_suN/2"/>
</dbReference>
<dbReference type="InterPro" id="IPR001750">
    <property type="entry name" value="ND/Mrp_TM"/>
</dbReference>
<dbReference type="InterPro" id="IPR045693">
    <property type="entry name" value="Ndh2_N"/>
</dbReference>
<dbReference type="NCBIfam" id="TIGR01770">
    <property type="entry name" value="NDH_I_N"/>
    <property type="match status" value="1"/>
</dbReference>
<dbReference type="NCBIfam" id="NF002701">
    <property type="entry name" value="PRK02504.1"/>
    <property type="match status" value="1"/>
</dbReference>
<dbReference type="PANTHER" id="PTHR22773">
    <property type="entry name" value="NADH DEHYDROGENASE"/>
    <property type="match status" value="1"/>
</dbReference>
<dbReference type="Pfam" id="PF19530">
    <property type="entry name" value="Ndh2_N"/>
    <property type="match status" value="1"/>
</dbReference>
<dbReference type="Pfam" id="PF00361">
    <property type="entry name" value="Proton_antipo_M"/>
    <property type="match status" value="1"/>
</dbReference>
<dbReference type="PRINTS" id="PR01434">
    <property type="entry name" value="NADHDHGNASE5"/>
</dbReference>
<accession>P72714</accession>
<accession>Q55269</accession>
<gene>
    <name evidence="1" type="primary">ndhB</name>
    <name type="ordered locus">sll0223</name>
</gene>
<keyword id="KW-0472">Membrane</keyword>
<keyword id="KW-0520">NAD</keyword>
<keyword id="KW-0521">NADP</keyword>
<keyword id="KW-0618">Plastoquinone</keyword>
<keyword id="KW-0874">Quinone</keyword>
<keyword id="KW-1185">Reference proteome</keyword>
<keyword id="KW-0793">Thylakoid</keyword>
<keyword id="KW-1278">Translocase</keyword>
<keyword id="KW-0812">Transmembrane</keyword>
<keyword id="KW-1133">Transmembrane helix</keyword>
<keyword id="KW-0813">Transport</keyword>
<evidence type="ECO:0000255" key="1">
    <source>
        <dbReference type="HAMAP-Rule" id="MF_00445"/>
    </source>
</evidence>
<evidence type="ECO:0000305" key="2"/>
<reference key="1">
    <citation type="journal article" date="1991" name="Proc. Natl. Acad. Sci. U.S.A.">
        <title>A gene homologous to the subunit-2 gene of NADH dehydrogenase is essential to inorganic carbon transport of Synechocystis PCC6803.</title>
        <authorList>
            <person name="Ogawa T."/>
        </authorList>
    </citation>
    <scope>NUCLEOTIDE SEQUENCE [GENOMIC DNA]</scope>
</reference>
<reference key="2">
    <citation type="journal article" date="1996" name="DNA Res.">
        <title>Sequence analysis of the genome of the unicellular cyanobacterium Synechocystis sp. strain PCC6803. II. Sequence determination of the entire genome and assignment of potential protein-coding regions.</title>
        <authorList>
            <person name="Kaneko T."/>
            <person name="Sato S."/>
            <person name="Kotani H."/>
            <person name="Tanaka A."/>
            <person name="Asamizu E."/>
            <person name="Nakamura Y."/>
            <person name="Miyajima N."/>
            <person name="Hirosawa M."/>
            <person name="Sugiura M."/>
            <person name="Sasamoto S."/>
            <person name="Kimura T."/>
            <person name="Hosouchi T."/>
            <person name="Matsuno A."/>
            <person name="Muraki A."/>
            <person name="Nakazaki N."/>
            <person name="Naruo K."/>
            <person name="Okumura S."/>
            <person name="Shimpo S."/>
            <person name="Takeuchi C."/>
            <person name="Wada T."/>
            <person name="Watanabe A."/>
            <person name="Yamada M."/>
            <person name="Yasuda M."/>
            <person name="Tabata S."/>
        </authorList>
    </citation>
    <scope>NUCLEOTIDE SEQUENCE [LARGE SCALE GENOMIC DNA]</scope>
    <source>
        <strain>ATCC 27184 / PCC 6803 / Kazusa</strain>
    </source>
</reference>
<organism>
    <name type="scientific">Synechocystis sp. (strain ATCC 27184 / PCC 6803 / Kazusa)</name>
    <dbReference type="NCBI Taxonomy" id="1111708"/>
    <lineage>
        <taxon>Bacteria</taxon>
        <taxon>Bacillati</taxon>
        <taxon>Cyanobacteriota</taxon>
        <taxon>Cyanophyceae</taxon>
        <taxon>Synechococcales</taxon>
        <taxon>Merismopediaceae</taxon>
        <taxon>Synechocystis</taxon>
    </lineage>
</organism>
<sequence length="521" mass="55355">MDFSSNVAAQLNAGTILPEGIVIVTLLLVLIVDLIGGRKVALALPYLAIAGLLVSVGLLVTSWSMADPIGFIGAFNGDNLSIIFRAIIALSTVVTILMSVRYVQQTGTSLAEFIAILLTATLGGMFLSAANELVMVFISLEMLSISSYLMTGYMKRDPRSNEAALKYLLIGASSSAIFLYGLSLLYGLSGGETQLVLIAEKLVNADTVGQSLGLAIALVFVIAGIAFKISAVPFHQWTPDVYEGSPTPVVAFLSVGSKAAGFAVAIRLLVTAFGGITDEWHVIFTALAVLSMVLGNVVALAQTSMKRMLAYSSIGQAGFVMIGLVAGSEDGYASMVFYMLIYLFMNLGAFSCIILFTLRTGSDQISDYAGLYHKDPLLTLGLSICLLSLGGIPPLAGFFGKIYIFWAGWQSGLYGLVLLGLVTSVVSIYYYIRVVKMMVVKEPQEMSEVIKNYPAIKWNLPGMRPLQVGIVATLVATSLAGILANPLFNLATDSVVSTKMLQTALQQTGETPAIAISHDLP</sequence>
<proteinExistence type="inferred from homology"/>